<dbReference type="EC" id="3.2.1.17"/>
<dbReference type="EMBL" id="L14853">
    <property type="protein sequence ID" value="AAA74656.1"/>
    <property type="molecule type" value="mRNA"/>
</dbReference>
<dbReference type="SMR" id="P12067"/>
<dbReference type="FunCoup" id="P12067">
    <property type="interactions" value="56"/>
</dbReference>
<dbReference type="CAZy" id="GH22">
    <property type="family name" value="Glycoside Hydrolase Family 22"/>
</dbReference>
<dbReference type="PeptideAtlas" id="P12067"/>
<dbReference type="InParanoid" id="P12067"/>
<dbReference type="Proteomes" id="UP000008227">
    <property type="component" value="Unplaced"/>
</dbReference>
<dbReference type="Proteomes" id="UP000314985">
    <property type="component" value="Unplaced"/>
</dbReference>
<dbReference type="Proteomes" id="UP000694570">
    <property type="component" value="Unplaced"/>
</dbReference>
<dbReference type="Proteomes" id="UP000694571">
    <property type="component" value="Unplaced"/>
</dbReference>
<dbReference type="Proteomes" id="UP000694720">
    <property type="component" value="Unplaced"/>
</dbReference>
<dbReference type="Proteomes" id="UP000694722">
    <property type="component" value="Unplaced"/>
</dbReference>
<dbReference type="Proteomes" id="UP000694723">
    <property type="component" value="Unplaced"/>
</dbReference>
<dbReference type="Proteomes" id="UP000694724">
    <property type="component" value="Unplaced"/>
</dbReference>
<dbReference type="Proteomes" id="UP000694725">
    <property type="component" value="Unplaced"/>
</dbReference>
<dbReference type="Proteomes" id="UP000694726">
    <property type="component" value="Unplaced"/>
</dbReference>
<dbReference type="Proteomes" id="UP000694727">
    <property type="component" value="Unplaced"/>
</dbReference>
<dbReference type="Proteomes" id="UP000694728">
    <property type="component" value="Unplaced"/>
</dbReference>
<dbReference type="GO" id="GO:0005576">
    <property type="term" value="C:extracellular region"/>
    <property type="evidence" value="ECO:0007669"/>
    <property type="project" value="UniProtKB-SubCell"/>
</dbReference>
<dbReference type="GO" id="GO:0003796">
    <property type="term" value="F:lysozyme activity"/>
    <property type="evidence" value="ECO:0000318"/>
    <property type="project" value="GO_Central"/>
</dbReference>
<dbReference type="GO" id="GO:0050829">
    <property type="term" value="P:defense response to Gram-negative bacterium"/>
    <property type="evidence" value="ECO:0000318"/>
    <property type="project" value="GO_Central"/>
</dbReference>
<dbReference type="GO" id="GO:0050830">
    <property type="term" value="P:defense response to Gram-positive bacterium"/>
    <property type="evidence" value="ECO:0000318"/>
    <property type="project" value="GO_Central"/>
</dbReference>
<dbReference type="GO" id="GO:0007586">
    <property type="term" value="P:digestion"/>
    <property type="evidence" value="ECO:0007669"/>
    <property type="project" value="UniProtKB-KW"/>
</dbReference>
<dbReference type="GO" id="GO:0031640">
    <property type="term" value="P:killing of cells of another organism"/>
    <property type="evidence" value="ECO:0007669"/>
    <property type="project" value="UniProtKB-KW"/>
</dbReference>
<dbReference type="CDD" id="cd16897">
    <property type="entry name" value="LYZ_C"/>
    <property type="match status" value="1"/>
</dbReference>
<dbReference type="FunFam" id="1.10.530.10:FF:000001">
    <property type="entry name" value="Lysozyme C"/>
    <property type="match status" value="1"/>
</dbReference>
<dbReference type="Gene3D" id="1.10.530.10">
    <property type="match status" value="1"/>
</dbReference>
<dbReference type="InterPro" id="IPR001916">
    <property type="entry name" value="Glyco_hydro_22"/>
</dbReference>
<dbReference type="InterPro" id="IPR019799">
    <property type="entry name" value="Glyco_hydro_22_CS"/>
</dbReference>
<dbReference type="InterPro" id="IPR000974">
    <property type="entry name" value="Glyco_hydro_22_lys"/>
</dbReference>
<dbReference type="InterPro" id="IPR023346">
    <property type="entry name" value="Lysozyme-like_dom_sf"/>
</dbReference>
<dbReference type="PANTHER" id="PTHR11407">
    <property type="entry name" value="LYSOZYME C"/>
    <property type="match status" value="1"/>
</dbReference>
<dbReference type="PANTHER" id="PTHR11407:SF28">
    <property type="entry name" value="LYSOZYME C"/>
    <property type="match status" value="1"/>
</dbReference>
<dbReference type="Pfam" id="PF00062">
    <property type="entry name" value="Lys"/>
    <property type="match status" value="1"/>
</dbReference>
<dbReference type="PRINTS" id="PR00137">
    <property type="entry name" value="LYSOZYME"/>
</dbReference>
<dbReference type="PRINTS" id="PR00135">
    <property type="entry name" value="LYZLACT"/>
</dbReference>
<dbReference type="SMART" id="SM00263">
    <property type="entry name" value="LYZ1"/>
    <property type="match status" value="1"/>
</dbReference>
<dbReference type="SUPFAM" id="SSF53955">
    <property type="entry name" value="Lysozyme-like"/>
    <property type="match status" value="1"/>
</dbReference>
<dbReference type="PROSITE" id="PS00128">
    <property type="entry name" value="GLYCOSYL_HYDROL_F22_1"/>
    <property type="match status" value="1"/>
</dbReference>
<dbReference type="PROSITE" id="PS51348">
    <property type="entry name" value="GLYCOSYL_HYDROL_F22_2"/>
    <property type="match status" value="1"/>
</dbReference>
<proteinExistence type="evidence at protein level"/>
<name>LYSC1_PIG</name>
<accession>P12067</accession>
<keyword id="KW-0929">Antimicrobial</keyword>
<keyword id="KW-0081">Bacteriolytic enzyme</keyword>
<keyword id="KW-0222">Digestion</keyword>
<keyword id="KW-0903">Direct protein sequencing</keyword>
<keyword id="KW-1015">Disulfide bond</keyword>
<keyword id="KW-0326">Glycosidase</keyword>
<keyword id="KW-0378">Hydrolase</keyword>
<keyword id="KW-1185">Reference proteome</keyword>
<keyword id="KW-0964">Secreted</keyword>
<feature type="chain" id="PRO_0000208853" description="Lysozyme C-1">
    <location>
        <begin position="1"/>
        <end position="128"/>
    </location>
</feature>
<feature type="domain" description="C-type lysozyme" evidence="1">
    <location>
        <begin position="1"/>
        <end position="128"/>
    </location>
</feature>
<feature type="active site" evidence="1">
    <location>
        <position position="35"/>
    </location>
</feature>
<feature type="active site" evidence="1">
    <location>
        <position position="51"/>
    </location>
</feature>
<feature type="disulfide bond" evidence="1">
    <location>
        <begin position="6"/>
        <end position="126"/>
    </location>
</feature>
<feature type="disulfide bond" evidence="1">
    <location>
        <begin position="30"/>
        <end position="114"/>
    </location>
</feature>
<feature type="disulfide bond" evidence="1">
    <location>
        <begin position="63"/>
        <end position="79"/>
    </location>
</feature>
<feature type="disulfide bond" evidence="1">
    <location>
        <begin position="75"/>
        <end position="93"/>
    </location>
</feature>
<reference key="1">
    <citation type="journal article" date="1989" name="J. Mol. Evol.">
        <title>Episodic evolution in the stomach lysozymes of ruminants.</title>
        <authorList>
            <person name="Jolles J."/>
            <person name="Jolles P."/>
            <person name="Bowman B.H."/>
            <person name="Prager E.M."/>
            <person name="Stewart C.-B."/>
            <person name="Wilson A.C."/>
        </authorList>
    </citation>
    <scope>PROTEIN SEQUENCE</scope>
    <source>
        <tissue>Stomach</tissue>
    </source>
</reference>
<reference key="2">
    <citation type="submission" date="1994-05" db="EMBL/GenBank/DDBJ databases">
        <authorList>
            <person name="Echetebu Z.O."/>
            <person name="Nevils M."/>
            <person name="Roberts R.M."/>
            <person name="Trout W.E."/>
        </authorList>
    </citation>
    <scope>NUCLEOTIDE SEQUENCE [MRNA] OF 13-128</scope>
    <source>
        <tissue>Spleen</tissue>
    </source>
</reference>
<comment type="function">
    <text>Lysozymes have primarily a bacteriolytic function; those in tissues and body fluids are associated with the monocyte-macrophage system and enhance the activity of immunoagents.</text>
</comment>
<comment type="catalytic activity">
    <reaction>
        <text>Hydrolysis of (1-&gt;4)-beta-linkages between N-acetylmuramic acid and N-acetyl-D-glucosamine residues in a peptidoglycan and between N-acetyl-D-glucosamine residues in chitodextrins.</text>
        <dbReference type="EC" id="3.2.1.17"/>
    </reaction>
</comment>
<comment type="subunit">
    <text>Monomer.</text>
</comment>
<comment type="subcellular location">
    <subcellularLocation>
        <location>Secreted</location>
    </subcellularLocation>
</comment>
<comment type="miscellaneous">
    <text>Lysozyme C is capable of both hydrolysis and transglycosylation; it also shows a slight esterase activity. It acts rapidly on both peptide-substituted and unsubstituted peptidoglycan, and slowly on chitin oligosaccharides.</text>
</comment>
<comment type="similarity">
    <text evidence="1">Belongs to the glycosyl hydrolase 22 family.</text>
</comment>
<organism>
    <name type="scientific">Sus scrofa</name>
    <name type="common">Pig</name>
    <dbReference type="NCBI Taxonomy" id="9823"/>
    <lineage>
        <taxon>Eukaryota</taxon>
        <taxon>Metazoa</taxon>
        <taxon>Chordata</taxon>
        <taxon>Craniata</taxon>
        <taxon>Vertebrata</taxon>
        <taxon>Euteleostomi</taxon>
        <taxon>Mammalia</taxon>
        <taxon>Eutheria</taxon>
        <taxon>Laurasiatheria</taxon>
        <taxon>Artiodactyla</taxon>
        <taxon>Suina</taxon>
        <taxon>Suidae</taxon>
        <taxon>Sus</taxon>
    </lineage>
</organism>
<protein>
    <recommendedName>
        <fullName>Lysozyme C-1</fullName>
        <ecNumber>3.2.1.17</ecNumber>
    </recommendedName>
    <alternativeName>
        <fullName>1,4-beta-N-acetylmuramidase C</fullName>
    </alternativeName>
</protein>
<sequence>KVYDRCEFARILKKSGMDGYRGVSLANWVCLAKWESDFNTKAINRNVGSTDYGIFQINSRYWCNDGKTPKAVNACHISCKVLLDDDLSQDIECAKRVVRDPQGIKAWVAWRTHCQNKDVSQYIRGCKL</sequence>
<evidence type="ECO:0000255" key="1">
    <source>
        <dbReference type="PROSITE-ProRule" id="PRU00680"/>
    </source>
</evidence>